<dbReference type="EMBL" id="BC133560">
    <property type="protein sequence ID" value="AAI33561.1"/>
    <property type="molecule type" value="mRNA"/>
</dbReference>
<dbReference type="RefSeq" id="NP_001075929.1">
    <property type="nucleotide sequence ID" value="NM_001082460.2"/>
</dbReference>
<dbReference type="SMR" id="A2VE40"/>
<dbReference type="FunCoup" id="A2VE40">
    <property type="interactions" value="2426"/>
</dbReference>
<dbReference type="STRING" id="9913.ENSBTAP00000022773"/>
<dbReference type="PaxDb" id="9913-ENSBTAP00000022773"/>
<dbReference type="Ensembl" id="ENSBTAT00000022773.6">
    <property type="protein sequence ID" value="ENSBTAP00000022773.4"/>
    <property type="gene ID" value="ENSBTAG00000017133.6"/>
</dbReference>
<dbReference type="GeneID" id="616799"/>
<dbReference type="KEGG" id="bta:616799"/>
<dbReference type="CTD" id="84296"/>
<dbReference type="VEuPathDB" id="HostDB:ENSBTAG00000017133"/>
<dbReference type="VGNC" id="VGNC:29363">
    <property type="gene designation" value="GINS4"/>
</dbReference>
<dbReference type="eggNOG" id="KOG3176">
    <property type="taxonomic scope" value="Eukaryota"/>
</dbReference>
<dbReference type="GeneTree" id="ENSGT00390000003246"/>
<dbReference type="HOGENOM" id="CLU_071893_3_0_1"/>
<dbReference type="InParanoid" id="A2VE40"/>
<dbReference type="OMA" id="ILETAWI"/>
<dbReference type="OrthoDB" id="338231at2759"/>
<dbReference type="TreeFam" id="TF105863"/>
<dbReference type="Reactome" id="R-BTA-176974">
    <property type="pathway name" value="Unwinding of DNA"/>
</dbReference>
<dbReference type="Proteomes" id="UP000009136">
    <property type="component" value="Chromosome 27"/>
</dbReference>
<dbReference type="Bgee" id="ENSBTAG00000017133">
    <property type="expression patterns" value="Expressed in oocyte and 95 other cell types or tissues"/>
</dbReference>
<dbReference type="GO" id="GO:0071162">
    <property type="term" value="C:CMG complex"/>
    <property type="evidence" value="ECO:0000250"/>
    <property type="project" value="UniProtKB"/>
</dbReference>
<dbReference type="GO" id="GO:0005737">
    <property type="term" value="C:cytoplasm"/>
    <property type="evidence" value="ECO:0007669"/>
    <property type="project" value="Ensembl"/>
</dbReference>
<dbReference type="GO" id="GO:0000811">
    <property type="term" value="C:GINS complex"/>
    <property type="evidence" value="ECO:0000318"/>
    <property type="project" value="GO_Central"/>
</dbReference>
<dbReference type="GO" id="GO:0006261">
    <property type="term" value="P:DNA-templated DNA replication"/>
    <property type="evidence" value="ECO:0007669"/>
    <property type="project" value="InterPro"/>
</dbReference>
<dbReference type="GO" id="GO:0000727">
    <property type="term" value="P:double-strand break repair via break-induced replication"/>
    <property type="evidence" value="ECO:0000318"/>
    <property type="project" value="GO_Central"/>
</dbReference>
<dbReference type="GO" id="GO:0001833">
    <property type="term" value="P:inner cell mass cell proliferation"/>
    <property type="evidence" value="ECO:0007669"/>
    <property type="project" value="Ensembl"/>
</dbReference>
<dbReference type="CDD" id="cd11711">
    <property type="entry name" value="GINS_A_Sld5"/>
    <property type="match status" value="1"/>
</dbReference>
<dbReference type="CDD" id="cd21692">
    <property type="entry name" value="GINS_B_Sld5"/>
    <property type="match status" value="1"/>
</dbReference>
<dbReference type="FunFam" id="1.20.58.1030:FF:000002">
    <property type="entry name" value="DNA replication complex GINS protein SLD5"/>
    <property type="match status" value="1"/>
</dbReference>
<dbReference type="FunFam" id="3.40.5.60:FF:000001">
    <property type="entry name" value="DNA replication complex GINS protein SLD5"/>
    <property type="match status" value="1"/>
</dbReference>
<dbReference type="Gene3D" id="1.20.58.1030">
    <property type="match status" value="1"/>
</dbReference>
<dbReference type="Gene3D" id="3.40.5.60">
    <property type="match status" value="1"/>
</dbReference>
<dbReference type="InterPro" id="IPR021151">
    <property type="entry name" value="GINS_A"/>
</dbReference>
<dbReference type="InterPro" id="IPR036224">
    <property type="entry name" value="GINS_bundle-like_dom_sf"/>
</dbReference>
<dbReference type="InterPro" id="IPR008591">
    <property type="entry name" value="GINS_Sld5"/>
</dbReference>
<dbReference type="InterPro" id="IPR031633">
    <property type="entry name" value="SLD5_C"/>
</dbReference>
<dbReference type="InterPro" id="IPR038749">
    <property type="entry name" value="Sld5_GINS_A"/>
</dbReference>
<dbReference type="PANTHER" id="PTHR21206:SF0">
    <property type="entry name" value="DNA REPLICATION COMPLEX GINS PROTEIN SLD5"/>
    <property type="match status" value="1"/>
</dbReference>
<dbReference type="PANTHER" id="PTHR21206">
    <property type="entry name" value="SLD5 PROTEIN"/>
    <property type="match status" value="1"/>
</dbReference>
<dbReference type="Pfam" id="PF05916">
    <property type="entry name" value="Sld5"/>
    <property type="match status" value="1"/>
</dbReference>
<dbReference type="Pfam" id="PF16922">
    <property type="entry name" value="SLD5_C"/>
    <property type="match status" value="1"/>
</dbReference>
<dbReference type="PIRSF" id="PIRSF007764">
    <property type="entry name" value="Sld5"/>
    <property type="match status" value="1"/>
</dbReference>
<dbReference type="SUPFAM" id="SSF158573">
    <property type="entry name" value="GINS helical bundle-like"/>
    <property type="match status" value="1"/>
</dbReference>
<dbReference type="SUPFAM" id="SSF160059">
    <property type="entry name" value="PriA/YqbF domain"/>
    <property type="match status" value="1"/>
</dbReference>
<organism>
    <name type="scientific">Bos taurus</name>
    <name type="common">Bovine</name>
    <dbReference type="NCBI Taxonomy" id="9913"/>
    <lineage>
        <taxon>Eukaryota</taxon>
        <taxon>Metazoa</taxon>
        <taxon>Chordata</taxon>
        <taxon>Craniata</taxon>
        <taxon>Vertebrata</taxon>
        <taxon>Euteleostomi</taxon>
        <taxon>Mammalia</taxon>
        <taxon>Eutheria</taxon>
        <taxon>Laurasiatheria</taxon>
        <taxon>Artiodactyla</taxon>
        <taxon>Ruminantia</taxon>
        <taxon>Pecora</taxon>
        <taxon>Bovidae</taxon>
        <taxon>Bovinae</taxon>
        <taxon>Bos</taxon>
    </lineage>
</organism>
<accession>A2VE40</accession>
<feature type="chain" id="PRO_0000327619" description="DNA replication complex GINS protein SLD5">
    <location>
        <begin position="1"/>
        <end position="223"/>
    </location>
</feature>
<feature type="region of interest" description="Important for GINS complex assembly" evidence="1">
    <location>
        <begin position="166"/>
        <end position="223"/>
    </location>
</feature>
<feature type="modified residue" description="N-acetylmethionine" evidence="3">
    <location>
        <position position="1"/>
    </location>
</feature>
<feature type="modified residue" description="Phosphoserine" evidence="3">
    <location>
        <position position="12"/>
    </location>
</feature>
<feature type="modified residue" description="Phosphoserine" evidence="3">
    <location>
        <position position="16"/>
    </location>
</feature>
<proteinExistence type="evidence at transcript level"/>
<sequence>MAEEADLLGQDSDGDSEEVILTPAELIDRLEQAWMNEKFAPELLENKSEIVECVMEQLEHMEENLKRAKKGDLKVSIHQMEMERIRFVLSSYLRCRLMKIEKFFPHTLEKEKTRREEEPPILSPEELVFAKEFLANTETYLKDTALKHMPPNLQKVDLLRTVPKPDLDAYVFLRVKERQENILVEPENDEQRDYVIDLEEGSQHLMRYRTVAPLVASGAIQLI</sequence>
<keyword id="KW-0007">Acetylation</keyword>
<keyword id="KW-0158">Chromosome</keyword>
<keyword id="KW-0235">DNA replication</keyword>
<keyword id="KW-0539">Nucleus</keyword>
<keyword id="KW-0597">Phosphoprotein</keyword>
<keyword id="KW-1185">Reference proteome</keyword>
<evidence type="ECO:0000250" key="1"/>
<evidence type="ECO:0000250" key="2">
    <source>
        <dbReference type="UniProtKB" id="O75419"/>
    </source>
</evidence>
<evidence type="ECO:0000250" key="3">
    <source>
        <dbReference type="UniProtKB" id="Q9BRT9"/>
    </source>
</evidence>
<evidence type="ECO:0000305" key="4"/>
<name>SLD5_BOVIN</name>
<comment type="function">
    <text evidence="2">Required for initiation of chromosomal DNA replication. Core component of CDC45-MCM-GINS (CMG) helicase, the molecular machine that unwinds template DNA during replication, and around which the replisome is built.</text>
</comment>
<comment type="subunit">
    <text evidence="2">Component of the CMG helicase complex, a hexameric ring of related MCM2-7 subunits stabilized by CDC45 and the tetrameric GINS complex. Associated with ORC2. Interacts with HELB.</text>
</comment>
<comment type="subcellular location">
    <subcellularLocation>
        <location evidence="2">Nucleus</location>
    </subcellularLocation>
    <subcellularLocation>
        <location evidence="2">Chromosome</location>
    </subcellularLocation>
    <text evidence="2">Associates with chromatin.</text>
</comment>
<comment type="similarity">
    <text evidence="4">Belongs to the GINS4/SLD5 family.</text>
</comment>
<protein>
    <recommendedName>
        <fullName>DNA replication complex GINS protein SLD5</fullName>
    </recommendedName>
    <alternativeName>
        <fullName>GINS complex subunit 4</fullName>
    </alternativeName>
</protein>
<gene>
    <name type="primary">GINS4</name>
    <name type="synonym">SLD5</name>
</gene>
<reference key="1">
    <citation type="submission" date="2007-02" db="EMBL/GenBank/DDBJ databases">
        <authorList>
            <consortium name="NIH - Mammalian Gene Collection (MGC) project"/>
        </authorList>
    </citation>
    <scope>NUCLEOTIDE SEQUENCE [LARGE SCALE MRNA]</scope>
    <source>
        <strain>Hereford</strain>
        <tissue>Thymus</tissue>
    </source>
</reference>